<evidence type="ECO:0000255" key="1">
    <source>
        <dbReference type="HAMAP-Rule" id="MF_00600"/>
    </source>
</evidence>
<evidence type="ECO:0000256" key="2">
    <source>
        <dbReference type="SAM" id="MobiDB-lite"/>
    </source>
</evidence>
<dbReference type="EC" id="5.6.1.7" evidence="1"/>
<dbReference type="EMBL" id="CP001034">
    <property type="protein sequence ID" value="ACB84046.1"/>
    <property type="molecule type" value="Genomic_DNA"/>
</dbReference>
<dbReference type="RefSeq" id="WP_012446933.1">
    <property type="nucleotide sequence ID" value="NC_010718.1"/>
</dbReference>
<dbReference type="SMR" id="B2A5V3"/>
<dbReference type="FunCoup" id="B2A5V3">
    <property type="interactions" value="403"/>
</dbReference>
<dbReference type="STRING" id="457570.Nther_0450"/>
<dbReference type="KEGG" id="nth:Nther_0450"/>
<dbReference type="eggNOG" id="COG0459">
    <property type="taxonomic scope" value="Bacteria"/>
</dbReference>
<dbReference type="HOGENOM" id="CLU_016503_3_0_9"/>
<dbReference type="InParanoid" id="B2A5V3"/>
<dbReference type="OrthoDB" id="9766614at2"/>
<dbReference type="Proteomes" id="UP000001683">
    <property type="component" value="Chromosome"/>
</dbReference>
<dbReference type="GO" id="GO:0005737">
    <property type="term" value="C:cytoplasm"/>
    <property type="evidence" value="ECO:0007669"/>
    <property type="project" value="UniProtKB-SubCell"/>
</dbReference>
<dbReference type="GO" id="GO:0005524">
    <property type="term" value="F:ATP binding"/>
    <property type="evidence" value="ECO:0007669"/>
    <property type="project" value="UniProtKB-UniRule"/>
</dbReference>
<dbReference type="GO" id="GO:0140662">
    <property type="term" value="F:ATP-dependent protein folding chaperone"/>
    <property type="evidence" value="ECO:0007669"/>
    <property type="project" value="InterPro"/>
</dbReference>
<dbReference type="GO" id="GO:0016853">
    <property type="term" value="F:isomerase activity"/>
    <property type="evidence" value="ECO:0007669"/>
    <property type="project" value="UniProtKB-KW"/>
</dbReference>
<dbReference type="GO" id="GO:0051082">
    <property type="term" value="F:unfolded protein binding"/>
    <property type="evidence" value="ECO:0007669"/>
    <property type="project" value="UniProtKB-UniRule"/>
</dbReference>
<dbReference type="GO" id="GO:0042026">
    <property type="term" value="P:protein refolding"/>
    <property type="evidence" value="ECO:0007669"/>
    <property type="project" value="UniProtKB-UniRule"/>
</dbReference>
<dbReference type="CDD" id="cd03344">
    <property type="entry name" value="GroEL"/>
    <property type="match status" value="1"/>
</dbReference>
<dbReference type="FunFam" id="3.50.7.10:FF:000001">
    <property type="entry name" value="60 kDa chaperonin"/>
    <property type="match status" value="1"/>
</dbReference>
<dbReference type="Gene3D" id="3.50.7.10">
    <property type="entry name" value="GroEL"/>
    <property type="match status" value="1"/>
</dbReference>
<dbReference type="Gene3D" id="1.10.560.10">
    <property type="entry name" value="GroEL-like equatorial domain"/>
    <property type="match status" value="1"/>
</dbReference>
<dbReference type="Gene3D" id="3.30.260.10">
    <property type="entry name" value="TCP-1-like chaperonin intermediate domain"/>
    <property type="match status" value="1"/>
</dbReference>
<dbReference type="HAMAP" id="MF_00600">
    <property type="entry name" value="CH60"/>
    <property type="match status" value="1"/>
</dbReference>
<dbReference type="InterPro" id="IPR018370">
    <property type="entry name" value="Chaperonin_Cpn60_CS"/>
</dbReference>
<dbReference type="InterPro" id="IPR001844">
    <property type="entry name" value="Cpn60/GroEL"/>
</dbReference>
<dbReference type="InterPro" id="IPR002423">
    <property type="entry name" value="Cpn60/GroEL/TCP-1"/>
</dbReference>
<dbReference type="InterPro" id="IPR027409">
    <property type="entry name" value="GroEL-like_apical_dom_sf"/>
</dbReference>
<dbReference type="InterPro" id="IPR027413">
    <property type="entry name" value="GROEL-like_equatorial_sf"/>
</dbReference>
<dbReference type="InterPro" id="IPR027410">
    <property type="entry name" value="TCP-1-like_intermed_sf"/>
</dbReference>
<dbReference type="NCBIfam" id="TIGR02348">
    <property type="entry name" value="GroEL"/>
    <property type="match status" value="1"/>
</dbReference>
<dbReference type="NCBIfam" id="NF000592">
    <property type="entry name" value="PRK00013.1"/>
    <property type="match status" value="1"/>
</dbReference>
<dbReference type="NCBIfam" id="NF009487">
    <property type="entry name" value="PRK12849.1"/>
    <property type="match status" value="1"/>
</dbReference>
<dbReference type="NCBIfam" id="NF009488">
    <property type="entry name" value="PRK12850.1"/>
    <property type="match status" value="1"/>
</dbReference>
<dbReference type="NCBIfam" id="NF009489">
    <property type="entry name" value="PRK12851.1"/>
    <property type="match status" value="1"/>
</dbReference>
<dbReference type="PANTHER" id="PTHR45633">
    <property type="entry name" value="60 KDA HEAT SHOCK PROTEIN, MITOCHONDRIAL"/>
    <property type="match status" value="1"/>
</dbReference>
<dbReference type="Pfam" id="PF00118">
    <property type="entry name" value="Cpn60_TCP1"/>
    <property type="match status" value="1"/>
</dbReference>
<dbReference type="PRINTS" id="PR00298">
    <property type="entry name" value="CHAPERONIN60"/>
</dbReference>
<dbReference type="SUPFAM" id="SSF52029">
    <property type="entry name" value="GroEL apical domain-like"/>
    <property type="match status" value="1"/>
</dbReference>
<dbReference type="SUPFAM" id="SSF48592">
    <property type="entry name" value="GroEL equatorial domain-like"/>
    <property type="match status" value="2"/>
</dbReference>
<dbReference type="PROSITE" id="PS00296">
    <property type="entry name" value="CHAPERONINS_CPN60"/>
    <property type="match status" value="1"/>
</dbReference>
<name>CH60_NATTJ</name>
<protein>
    <recommendedName>
        <fullName evidence="1">Chaperonin GroEL</fullName>
        <ecNumber evidence="1">5.6.1.7</ecNumber>
    </recommendedName>
    <alternativeName>
        <fullName evidence="1">60 kDa chaperonin</fullName>
    </alternativeName>
    <alternativeName>
        <fullName evidence="1">Chaperonin-60</fullName>
        <shortName evidence="1">Cpn60</shortName>
    </alternativeName>
</protein>
<feature type="chain" id="PRO_1000130039" description="Chaperonin GroEL">
    <location>
        <begin position="1"/>
        <end position="548"/>
    </location>
</feature>
<feature type="region of interest" description="Disordered" evidence="2">
    <location>
        <begin position="522"/>
        <end position="548"/>
    </location>
</feature>
<feature type="compositionally biased region" description="Acidic residues" evidence="2">
    <location>
        <begin position="522"/>
        <end position="531"/>
    </location>
</feature>
<feature type="compositionally biased region" description="Gly residues" evidence="2">
    <location>
        <begin position="532"/>
        <end position="548"/>
    </location>
</feature>
<feature type="binding site" evidence="1">
    <location>
        <begin position="29"/>
        <end position="32"/>
    </location>
    <ligand>
        <name>ATP</name>
        <dbReference type="ChEBI" id="CHEBI:30616"/>
    </ligand>
</feature>
<feature type="binding site" evidence="1">
    <location>
        <begin position="86"/>
        <end position="90"/>
    </location>
    <ligand>
        <name>ATP</name>
        <dbReference type="ChEBI" id="CHEBI:30616"/>
    </ligand>
</feature>
<feature type="binding site" evidence="1">
    <location>
        <position position="413"/>
    </location>
    <ligand>
        <name>ATP</name>
        <dbReference type="ChEBI" id="CHEBI:30616"/>
    </ligand>
</feature>
<feature type="binding site" evidence="1">
    <location>
        <begin position="476"/>
        <end position="478"/>
    </location>
    <ligand>
        <name>ATP</name>
        <dbReference type="ChEBI" id="CHEBI:30616"/>
    </ligand>
</feature>
<feature type="binding site" evidence="1">
    <location>
        <position position="492"/>
    </location>
    <ligand>
        <name>ATP</name>
        <dbReference type="ChEBI" id="CHEBI:30616"/>
    </ligand>
</feature>
<sequence>MAKDIKFREDARARLEQGVNKLADTLKVTLGPKGRNVVLDKKFGSPQITNDGVTIARDIDLEDNYENMGAQLVKEVATQTNDVAGDGTTTATILAQAMVNEGIKNVTAGANPMIIRKGIQKAVDRAVEELQKNAVSVEDKESISQVASISANDEEVGKLIAEAMEKVGKDGVITVEESKSFKTDLNVVEGMQFDRGYVSPYMVTDNEKMEAHLEEPYILITDKKIGNIQEILPVLEKIVEQGKEVLLIAEDIEGEALATLVVNKLRGTFTCVGVKAPGFGDRRKAMLEDIAVLTGGQVISEDVGLELKNADISMLGRARQVTITKDDTTIVDGYGNEEDIQKRITQLRTQIEETTSDFDREKLEERLAKLAGGVAVVEVGAATETEMKEKKLRIEDALNSTRAAVEEGIVAGGGTALIDVLPSLEEVQADGDESTGVSIVRRALEEPVRQLAHNSGAEGSIVAEQVKQKGTNIGFNALENDYTNMLDAGVVDPKKVTRSALENAGSIAAMFLTTEAVVADLPDEDDNDDGDMGGGAPGMGGMGGMPGM</sequence>
<gene>
    <name evidence="1" type="primary">groEL</name>
    <name evidence="1" type="synonym">groL</name>
    <name type="ordered locus">Nther_0450</name>
</gene>
<proteinExistence type="inferred from homology"/>
<keyword id="KW-0067">ATP-binding</keyword>
<keyword id="KW-0143">Chaperone</keyword>
<keyword id="KW-0963">Cytoplasm</keyword>
<keyword id="KW-0413">Isomerase</keyword>
<keyword id="KW-0547">Nucleotide-binding</keyword>
<keyword id="KW-1185">Reference proteome</keyword>
<reference key="1">
    <citation type="submission" date="2008-04" db="EMBL/GenBank/DDBJ databases">
        <title>Complete sequence of chromosome of Natranaerobius thermophilus JW/NM-WN-LF.</title>
        <authorList>
            <consortium name="US DOE Joint Genome Institute"/>
            <person name="Copeland A."/>
            <person name="Lucas S."/>
            <person name="Lapidus A."/>
            <person name="Glavina del Rio T."/>
            <person name="Dalin E."/>
            <person name="Tice H."/>
            <person name="Bruce D."/>
            <person name="Goodwin L."/>
            <person name="Pitluck S."/>
            <person name="Chertkov O."/>
            <person name="Brettin T."/>
            <person name="Detter J.C."/>
            <person name="Han C."/>
            <person name="Kuske C.R."/>
            <person name="Schmutz J."/>
            <person name="Larimer F."/>
            <person name="Land M."/>
            <person name="Hauser L."/>
            <person name="Kyrpides N."/>
            <person name="Lykidis A."/>
            <person name="Mesbah N.M."/>
            <person name="Wiegel J."/>
        </authorList>
    </citation>
    <scope>NUCLEOTIDE SEQUENCE [LARGE SCALE GENOMIC DNA]</scope>
    <source>
        <strain>ATCC BAA-1301 / DSM 18059 / JW/NM-WN-LF</strain>
    </source>
</reference>
<comment type="function">
    <text evidence="1">Together with its co-chaperonin GroES, plays an essential role in assisting protein folding. The GroEL-GroES system forms a nano-cage that allows encapsulation of the non-native substrate proteins and provides a physical environment optimized to promote and accelerate protein folding.</text>
</comment>
<comment type="catalytic activity">
    <reaction evidence="1">
        <text>ATP + H2O + a folded polypeptide = ADP + phosphate + an unfolded polypeptide.</text>
        <dbReference type="EC" id="5.6.1.7"/>
    </reaction>
</comment>
<comment type="subunit">
    <text evidence="1">Forms a cylinder of 14 subunits composed of two heptameric rings stacked back-to-back. Interacts with the co-chaperonin GroES.</text>
</comment>
<comment type="subcellular location">
    <subcellularLocation>
        <location evidence="1">Cytoplasm</location>
    </subcellularLocation>
</comment>
<comment type="similarity">
    <text evidence="1">Belongs to the chaperonin (HSP60) family.</text>
</comment>
<organism>
    <name type="scientific">Natranaerobius thermophilus (strain ATCC BAA-1301 / DSM 18059 / JW/NM-WN-LF)</name>
    <dbReference type="NCBI Taxonomy" id="457570"/>
    <lineage>
        <taxon>Bacteria</taxon>
        <taxon>Bacillati</taxon>
        <taxon>Bacillota</taxon>
        <taxon>Clostridia</taxon>
        <taxon>Natranaerobiales</taxon>
        <taxon>Natranaerobiaceae</taxon>
        <taxon>Natranaerobius</taxon>
    </lineage>
</organism>
<accession>B2A5V3</accession>